<reference key="1">
    <citation type="journal article" date="1997" name="Nature">
        <title>The nucleotide sequence of Saccharomyces cerevisiae chromosome XIII.</title>
        <authorList>
            <person name="Bowman S."/>
            <person name="Churcher C.M."/>
            <person name="Badcock K."/>
            <person name="Brown D."/>
            <person name="Chillingworth T."/>
            <person name="Connor R."/>
            <person name="Dedman K."/>
            <person name="Devlin K."/>
            <person name="Gentles S."/>
            <person name="Hamlin N."/>
            <person name="Hunt S."/>
            <person name="Jagels K."/>
            <person name="Lye G."/>
            <person name="Moule S."/>
            <person name="Odell C."/>
            <person name="Pearson D."/>
            <person name="Rajandream M.A."/>
            <person name="Rice P."/>
            <person name="Skelton J."/>
            <person name="Walsh S.V."/>
            <person name="Whitehead S."/>
            <person name="Barrell B.G."/>
        </authorList>
    </citation>
    <scope>NUCLEOTIDE SEQUENCE [LARGE SCALE GENOMIC DNA]</scope>
    <source>
        <strain>ATCC 204508 / S288c</strain>
    </source>
</reference>
<reference key="2">
    <citation type="journal article" date="2014" name="G3 (Bethesda)">
        <title>The reference genome sequence of Saccharomyces cerevisiae: Then and now.</title>
        <authorList>
            <person name="Engel S.R."/>
            <person name="Dietrich F.S."/>
            <person name="Fisk D.G."/>
            <person name="Binkley G."/>
            <person name="Balakrishnan R."/>
            <person name="Costanzo M.C."/>
            <person name="Dwight S.S."/>
            <person name="Hitz B.C."/>
            <person name="Karra K."/>
            <person name="Nash R.S."/>
            <person name="Weng S."/>
            <person name="Wong E.D."/>
            <person name="Lloyd P."/>
            <person name="Skrzypek M.S."/>
            <person name="Miyasato S.R."/>
            <person name="Simison M."/>
            <person name="Cherry J.M."/>
        </authorList>
    </citation>
    <scope>GENOME REANNOTATION</scope>
    <source>
        <strain>ATCC 204508 / S288c</strain>
    </source>
</reference>
<reference key="3">
    <citation type="journal article" date="2007" name="Genome Res.">
        <title>Approaching a complete repository of sequence-verified protein-encoding clones for Saccharomyces cerevisiae.</title>
        <authorList>
            <person name="Hu Y."/>
            <person name="Rolfs A."/>
            <person name="Bhullar B."/>
            <person name="Murthy T.V.S."/>
            <person name="Zhu C."/>
            <person name="Berger M.F."/>
            <person name="Camargo A.A."/>
            <person name="Kelley F."/>
            <person name="McCarron S."/>
            <person name="Jepson D."/>
            <person name="Richardson A."/>
            <person name="Raphael J."/>
            <person name="Moreira D."/>
            <person name="Taycher E."/>
            <person name="Zuo D."/>
            <person name="Mohr S."/>
            <person name="Kane M.F."/>
            <person name="Williamson J."/>
            <person name="Simpson A.J.G."/>
            <person name="Bulyk M.L."/>
            <person name="Harlow E."/>
            <person name="Marsischky G."/>
            <person name="Kolodner R.D."/>
            <person name="LaBaer J."/>
        </authorList>
    </citation>
    <scope>NUCLEOTIDE SEQUENCE [GENOMIC DNA]</scope>
    <source>
        <strain>ATCC 204508 / S288c</strain>
    </source>
</reference>
<reference key="4">
    <citation type="journal article" date="1999" name="Nucleic Acids Res.">
        <title>A Saccharomyces cerevisiae RNA 5'-triphosphatase related to mRNA capping enzyme.</title>
        <authorList>
            <person name="Rodriguez C.R."/>
            <person name="Takagi T."/>
            <person name="Cho E.J."/>
            <person name="Buratowski S."/>
        </authorList>
    </citation>
    <scope>CATALYTIC ACTIVITY</scope>
    <scope>COFACTOR</scope>
    <scope>SUBCELLULAR LOCATION</scope>
    <scope>FUNCTION</scope>
</reference>
<gene>
    <name evidence="3" type="primary">CTL1</name>
    <name type="ordered locus">YMR180C</name>
    <name type="ORF">YM8010.10C</name>
</gene>
<protein>
    <recommendedName>
        <fullName evidence="3">Polynucleotide 5'-triphosphatase CTL1</fullName>
        <ecNumber evidence="2">3.6.1.74</ecNumber>
    </recommendedName>
    <alternativeName>
        <fullName evidence="3">Capping enzyme RNA triphosphatase-like protein 1</fullName>
    </alternativeName>
    <alternativeName>
        <fullName evidence="3">mRNA 5'-triphosphatase CTL1</fullName>
        <shortName evidence="3">TPase CTL1</shortName>
    </alternativeName>
</protein>
<evidence type="ECO:0000256" key="1">
    <source>
        <dbReference type="SAM" id="MobiDB-lite"/>
    </source>
</evidence>
<evidence type="ECO:0000269" key="2">
    <source>
    </source>
</evidence>
<evidence type="ECO:0000303" key="3">
    <source>
    </source>
</evidence>
<evidence type="ECO:0000305" key="4"/>
<name>CTL1_YEAST</name>
<feature type="chain" id="PRO_0000210120" description="Polynucleotide 5'-triphosphatase CTL1">
    <location>
        <begin position="1"/>
        <end position="320"/>
    </location>
</feature>
<feature type="region of interest" description="Disordered" evidence="1">
    <location>
        <begin position="1"/>
        <end position="23"/>
    </location>
</feature>
<feature type="compositionally biased region" description="Polar residues" evidence="1">
    <location>
        <begin position="1"/>
        <end position="12"/>
    </location>
</feature>
<feature type="compositionally biased region" description="Basic and acidic residues" evidence="1">
    <location>
        <begin position="13"/>
        <end position="23"/>
    </location>
</feature>
<sequence>MSDQPETPSNSRNSHENVGAKKADANVASKFRSLHISETTKPLTSTRALYKTTRNNSRGATEFHKHVCKLAWKYLACIDKSSISHIEIEMKFGVITDKRTHRRMTPHNKPFIVQNRNGRLVSNVPEQMFSSFQELLRSKSENPSKCAPRVVKQVQKYTKDSIYNCNNASKVGKLTSWRCSEDLRNKELKLTYIKKVRVKDFLIRYPQSSLDAKISISLEVPEYETSAAFRNGFILQRTKSRSTYTFNDKMPLHLDLTKVTTTRRNSHQYTSHEVEVEMDPIFKETISANDREKFNEYMCSFLNASDLIRKAAERDNMLTT</sequence>
<dbReference type="EC" id="3.6.1.74" evidence="2"/>
<dbReference type="EMBL" id="Z49808">
    <property type="protein sequence ID" value="CAA89913.1"/>
    <property type="molecule type" value="Genomic_DNA"/>
</dbReference>
<dbReference type="EMBL" id="AY693065">
    <property type="protein sequence ID" value="AAT93084.1"/>
    <property type="molecule type" value="Genomic_DNA"/>
</dbReference>
<dbReference type="EMBL" id="BK006946">
    <property type="protein sequence ID" value="DAA10077.1"/>
    <property type="molecule type" value="Genomic_DNA"/>
</dbReference>
<dbReference type="PIR" id="S55127">
    <property type="entry name" value="S55127"/>
</dbReference>
<dbReference type="RefSeq" id="NP_013905.1">
    <property type="nucleotide sequence ID" value="NM_001182686.1"/>
</dbReference>
<dbReference type="SMR" id="Q03220"/>
<dbReference type="BioGRID" id="35358">
    <property type="interactions" value="79"/>
</dbReference>
<dbReference type="DIP" id="DIP-1776N"/>
<dbReference type="FunCoup" id="Q03220">
    <property type="interactions" value="36"/>
</dbReference>
<dbReference type="IntAct" id="Q03220">
    <property type="interactions" value="1"/>
</dbReference>
<dbReference type="MINT" id="Q03220"/>
<dbReference type="STRING" id="4932.YMR180C"/>
<dbReference type="PaxDb" id="4932-YMR180C"/>
<dbReference type="PeptideAtlas" id="Q03220"/>
<dbReference type="EnsemblFungi" id="YMR180C_mRNA">
    <property type="protein sequence ID" value="YMR180C"/>
    <property type="gene ID" value="YMR180C"/>
</dbReference>
<dbReference type="GeneID" id="855218"/>
<dbReference type="KEGG" id="sce:YMR180C"/>
<dbReference type="AGR" id="SGD:S000004792"/>
<dbReference type="SGD" id="S000004792">
    <property type="gene designation" value="CTL1"/>
</dbReference>
<dbReference type="VEuPathDB" id="FungiDB:YMR180C"/>
<dbReference type="HOGENOM" id="CLU_075385_0_0_1"/>
<dbReference type="InParanoid" id="Q03220"/>
<dbReference type="OMA" id="HENVGAK"/>
<dbReference type="OrthoDB" id="272147at2759"/>
<dbReference type="BioCyc" id="YEAST:G3O-32868-MONOMER"/>
<dbReference type="BRENDA" id="3.6.1.74">
    <property type="organism ID" value="984"/>
</dbReference>
<dbReference type="BioGRID-ORCS" id="855218">
    <property type="hits" value="0 hits in 10 CRISPR screens"/>
</dbReference>
<dbReference type="ChiTaRS" id="CTL1">
    <property type="organism name" value="yeast"/>
</dbReference>
<dbReference type="PRO" id="PR:Q03220"/>
<dbReference type="Proteomes" id="UP000002311">
    <property type="component" value="Chromosome XIII"/>
</dbReference>
<dbReference type="RNAct" id="Q03220">
    <property type="molecule type" value="protein"/>
</dbReference>
<dbReference type="GO" id="GO:0005737">
    <property type="term" value="C:cytoplasm"/>
    <property type="evidence" value="ECO:0000314"/>
    <property type="project" value="SGD"/>
</dbReference>
<dbReference type="GO" id="GO:0031533">
    <property type="term" value="C:mRNA capping enzyme complex"/>
    <property type="evidence" value="ECO:0000318"/>
    <property type="project" value="GO_Central"/>
</dbReference>
<dbReference type="GO" id="GO:0005634">
    <property type="term" value="C:nucleus"/>
    <property type="evidence" value="ECO:0000314"/>
    <property type="project" value="SGD"/>
</dbReference>
<dbReference type="GO" id="GO:0140818">
    <property type="term" value="F:mRNA 5'-triphosphate monophosphatase activity"/>
    <property type="evidence" value="ECO:0007669"/>
    <property type="project" value="RHEA"/>
</dbReference>
<dbReference type="GO" id="GO:0004651">
    <property type="term" value="F:polynucleotide 5'-phosphatase activity"/>
    <property type="evidence" value="ECO:0000314"/>
    <property type="project" value="SGD"/>
</dbReference>
<dbReference type="GO" id="GO:0006370">
    <property type="term" value="P:7-methylguanosine mRNA capping"/>
    <property type="evidence" value="ECO:0000318"/>
    <property type="project" value="GO_Central"/>
</dbReference>
<dbReference type="CDD" id="cd07470">
    <property type="entry name" value="CYTH-like_mRNA_RTPase"/>
    <property type="match status" value="1"/>
</dbReference>
<dbReference type="FunFam" id="3.20.100.10:FF:000005">
    <property type="entry name" value="Ctl1p"/>
    <property type="match status" value="1"/>
</dbReference>
<dbReference type="Gene3D" id="3.20.100.10">
    <property type="entry name" value="mRNA triphosphatase Cet1-like"/>
    <property type="match status" value="1"/>
</dbReference>
<dbReference type="InterPro" id="IPR040343">
    <property type="entry name" value="Cet1/Ctl1"/>
</dbReference>
<dbReference type="InterPro" id="IPR033469">
    <property type="entry name" value="CYTH-like_dom_sf"/>
</dbReference>
<dbReference type="InterPro" id="IPR004206">
    <property type="entry name" value="mRNA_triPase_Cet1"/>
</dbReference>
<dbReference type="InterPro" id="IPR037009">
    <property type="entry name" value="mRNA_triPase_Cet1_sf"/>
</dbReference>
<dbReference type="PANTHER" id="PTHR28118:SF1">
    <property type="entry name" value="POLYNUCLEOTIDE 5'-TRIPHOSPHATASE CTL1-RELATED"/>
    <property type="match status" value="1"/>
</dbReference>
<dbReference type="PANTHER" id="PTHR28118">
    <property type="entry name" value="POLYNUCLEOTIDE 5'-TRIPHOSPHATASE-RELATED"/>
    <property type="match status" value="1"/>
</dbReference>
<dbReference type="Pfam" id="PF02940">
    <property type="entry name" value="mRNA_triPase"/>
    <property type="match status" value="1"/>
</dbReference>
<dbReference type="SUPFAM" id="SSF55154">
    <property type="entry name" value="CYTH-like phosphatases"/>
    <property type="match status" value="1"/>
</dbReference>
<organism>
    <name type="scientific">Saccharomyces cerevisiae (strain ATCC 204508 / S288c)</name>
    <name type="common">Baker's yeast</name>
    <dbReference type="NCBI Taxonomy" id="559292"/>
    <lineage>
        <taxon>Eukaryota</taxon>
        <taxon>Fungi</taxon>
        <taxon>Dikarya</taxon>
        <taxon>Ascomycota</taxon>
        <taxon>Saccharomycotina</taxon>
        <taxon>Saccharomycetes</taxon>
        <taxon>Saccharomycetales</taxon>
        <taxon>Saccharomycetaceae</taxon>
        <taxon>Saccharomyces</taxon>
    </lineage>
</organism>
<comment type="function">
    <text evidence="2">Probably involved in an RNA processing event other than mRNA capping. Releases gamma-phosphate from the 5'-end of RNA to produce a diphosphate terminus.</text>
</comment>
<comment type="catalytic activity">
    <reaction evidence="2">
        <text>a 5'-end triphospho-ribonucleoside in mRNA + H2O = a 5'-end diphospho-ribonucleoside in mRNA + phosphate + H(+)</text>
        <dbReference type="Rhea" id="RHEA:67004"/>
        <dbReference type="Rhea" id="RHEA-COMP:17164"/>
        <dbReference type="Rhea" id="RHEA-COMP:17165"/>
        <dbReference type="ChEBI" id="CHEBI:15377"/>
        <dbReference type="ChEBI" id="CHEBI:15378"/>
        <dbReference type="ChEBI" id="CHEBI:43474"/>
        <dbReference type="ChEBI" id="CHEBI:167616"/>
        <dbReference type="ChEBI" id="CHEBI:167618"/>
        <dbReference type="EC" id="3.6.1.74"/>
    </reaction>
    <physiologicalReaction direction="left-to-right" evidence="2">
        <dbReference type="Rhea" id="RHEA:67005"/>
    </physiologicalReaction>
</comment>
<comment type="cofactor">
    <cofactor evidence="2">
        <name>Mg(2+)</name>
        <dbReference type="ChEBI" id="CHEBI:18420"/>
    </cofactor>
    <cofactor evidence="2">
        <name>Mn(2+)</name>
        <dbReference type="ChEBI" id="CHEBI:29035"/>
    </cofactor>
    <text evidence="2">Magnesium and/or manganese. Specific for polynucleotide RNA in the presence of magnesium, but becomes specific for nucleotide triphosphates in the presence of manganese.</text>
</comment>
<comment type="subcellular location">
    <subcellularLocation>
        <location evidence="2">Cytoplasm</location>
    </subcellularLocation>
    <subcellularLocation>
        <location evidence="2">Nucleus</location>
    </subcellularLocation>
</comment>
<comment type="similarity">
    <text evidence="4">Belongs to the fungal TPase family.</text>
</comment>
<keyword id="KW-0963">Cytoplasm</keyword>
<keyword id="KW-0378">Hydrolase</keyword>
<keyword id="KW-0507">mRNA processing</keyword>
<keyword id="KW-0539">Nucleus</keyword>
<keyword id="KW-1185">Reference proteome</keyword>
<proteinExistence type="evidence at protein level"/>
<accession>Q03220</accession>
<accession>D6W003</accession>